<reference key="1">
    <citation type="submission" date="2006-12" db="EMBL/GenBank/DDBJ databases">
        <title>Complete sequence of Acidovorax avenae subsp. citrulli AAC00-1.</title>
        <authorList>
            <person name="Copeland A."/>
            <person name="Lucas S."/>
            <person name="Lapidus A."/>
            <person name="Barry K."/>
            <person name="Detter J.C."/>
            <person name="Glavina del Rio T."/>
            <person name="Dalin E."/>
            <person name="Tice H."/>
            <person name="Pitluck S."/>
            <person name="Kiss H."/>
            <person name="Brettin T."/>
            <person name="Bruce D."/>
            <person name="Han C."/>
            <person name="Tapia R."/>
            <person name="Gilna P."/>
            <person name="Schmutz J."/>
            <person name="Larimer F."/>
            <person name="Land M."/>
            <person name="Hauser L."/>
            <person name="Kyrpides N."/>
            <person name="Kim E."/>
            <person name="Stahl D."/>
            <person name="Richardson P."/>
        </authorList>
    </citation>
    <scope>NUCLEOTIDE SEQUENCE [LARGE SCALE GENOMIC DNA]</scope>
    <source>
        <strain>AAC00-1</strain>
    </source>
</reference>
<protein>
    <recommendedName>
        <fullName evidence="1">Serine hydroxymethyltransferase</fullName>
        <shortName evidence="1">SHMT</shortName>
        <shortName evidence="1">Serine methylase</shortName>
        <ecNumber evidence="1">2.1.2.1</ecNumber>
    </recommendedName>
</protein>
<accession>A1TRH1</accession>
<gene>
    <name evidence="1" type="primary">glyA</name>
    <name type="ordered locus">Aave_2992</name>
</gene>
<evidence type="ECO:0000255" key="1">
    <source>
        <dbReference type="HAMAP-Rule" id="MF_00051"/>
    </source>
</evidence>
<keyword id="KW-0028">Amino-acid biosynthesis</keyword>
<keyword id="KW-0963">Cytoplasm</keyword>
<keyword id="KW-0554">One-carbon metabolism</keyword>
<keyword id="KW-0663">Pyridoxal phosphate</keyword>
<keyword id="KW-0808">Transferase</keyword>
<comment type="function">
    <text evidence="1">Catalyzes the reversible interconversion of serine and glycine with tetrahydrofolate (THF) serving as the one-carbon carrier. This reaction serves as the major source of one-carbon groups required for the biosynthesis of purines, thymidylate, methionine, and other important biomolecules. Also exhibits THF-independent aldolase activity toward beta-hydroxyamino acids, producing glycine and aldehydes, via a retro-aldol mechanism.</text>
</comment>
<comment type="catalytic activity">
    <reaction evidence="1">
        <text>(6R)-5,10-methylene-5,6,7,8-tetrahydrofolate + glycine + H2O = (6S)-5,6,7,8-tetrahydrofolate + L-serine</text>
        <dbReference type="Rhea" id="RHEA:15481"/>
        <dbReference type="ChEBI" id="CHEBI:15377"/>
        <dbReference type="ChEBI" id="CHEBI:15636"/>
        <dbReference type="ChEBI" id="CHEBI:33384"/>
        <dbReference type="ChEBI" id="CHEBI:57305"/>
        <dbReference type="ChEBI" id="CHEBI:57453"/>
        <dbReference type="EC" id="2.1.2.1"/>
    </reaction>
</comment>
<comment type="cofactor">
    <cofactor evidence="1">
        <name>pyridoxal 5'-phosphate</name>
        <dbReference type="ChEBI" id="CHEBI:597326"/>
    </cofactor>
</comment>
<comment type="pathway">
    <text evidence="1">One-carbon metabolism; tetrahydrofolate interconversion.</text>
</comment>
<comment type="pathway">
    <text evidence="1">Amino-acid biosynthesis; glycine biosynthesis; glycine from L-serine: step 1/1.</text>
</comment>
<comment type="subunit">
    <text evidence="1">Homodimer.</text>
</comment>
<comment type="subcellular location">
    <subcellularLocation>
        <location evidence="1">Cytoplasm</location>
    </subcellularLocation>
</comment>
<comment type="similarity">
    <text evidence="1">Belongs to the SHMT family.</text>
</comment>
<dbReference type="EC" id="2.1.2.1" evidence="1"/>
<dbReference type="EMBL" id="CP000512">
    <property type="protein sequence ID" value="ABM33559.1"/>
    <property type="molecule type" value="Genomic_DNA"/>
</dbReference>
<dbReference type="RefSeq" id="WP_011796069.1">
    <property type="nucleotide sequence ID" value="NC_008752.1"/>
</dbReference>
<dbReference type="SMR" id="A1TRH1"/>
<dbReference type="STRING" id="397945.Aave_2992"/>
<dbReference type="KEGG" id="aav:Aave_2992"/>
<dbReference type="eggNOG" id="COG0112">
    <property type="taxonomic scope" value="Bacteria"/>
</dbReference>
<dbReference type="HOGENOM" id="CLU_022477_2_1_4"/>
<dbReference type="OrthoDB" id="9803846at2"/>
<dbReference type="UniPathway" id="UPA00193"/>
<dbReference type="UniPathway" id="UPA00288">
    <property type="reaction ID" value="UER01023"/>
</dbReference>
<dbReference type="Proteomes" id="UP000002596">
    <property type="component" value="Chromosome"/>
</dbReference>
<dbReference type="GO" id="GO:0005829">
    <property type="term" value="C:cytosol"/>
    <property type="evidence" value="ECO:0007669"/>
    <property type="project" value="TreeGrafter"/>
</dbReference>
<dbReference type="GO" id="GO:0004372">
    <property type="term" value="F:glycine hydroxymethyltransferase activity"/>
    <property type="evidence" value="ECO:0007669"/>
    <property type="project" value="UniProtKB-UniRule"/>
</dbReference>
<dbReference type="GO" id="GO:0030170">
    <property type="term" value="F:pyridoxal phosphate binding"/>
    <property type="evidence" value="ECO:0007669"/>
    <property type="project" value="UniProtKB-UniRule"/>
</dbReference>
<dbReference type="GO" id="GO:0019264">
    <property type="term" value="P:glycine biosynthetic process from serine"/>
    <property type="evidence" value="ECO:0007669"/>
    <property type="project" value="UniProtKB-UniRule"/>
</dbReference>
<dbReference type="GO" id="GO:0035999">
    <property type="term" value="P:tetrahydrofolate interconversion"/>
    <property type="evidence" value="ECO:0007669"/>
    <property type="project" value="UniProtKB-UniRule"/>
</dbReference>
<dbReference type="CDD" id="cd00378">
    <property type="entry name" value="SHMT"/>
    <property type="match status" value="1"/>
</dbReference>
<dbReference type="FunFam" id="3.40.640.10:FF:000001">
    <property type="entry name" value="Serine hydroxymethyltransferase"/>
    <property type="match status" value="1"/>
</dbReference>
<dbReference type="FunFam" id="3.90.1150.10:FF:000003">
    <property type="entry name" value="Serine hydroxymethyltransferase"/>
    <property type="match status" value="1"/>
</dbReference>
<dbReference type="Gene3D" id="3.90.1150.10">
    <property type="entry name" value="Aspartate Aminotransferase, domain 1"/>
    <property type="match status" value="1"/>
</dbReference>
<dbReference type="Gene3D" id="3.40.640.10">
    <property type="entry name" value="Type I PLP-dependent aspartate aminotransferase-like (Major domain)"/>
    <property type="match status" value="1"/>
</dbReference>
<dbReference type="HAMAP" id="MF_00051">
    <property type="entry name" value="SHMT"/>
    <property type="match status" value="1"/>
</dbReference>
<dbReference type="InterPro" id="IPR015424">
    <property type="entry name" value="PyrdxlP-dep_Trfase"/>
</dbReference>
<dbReference type="InterPro" id="IPR015421">
    <property type="entry name" value="PyrdxlP-dep_Trfase_major"/>
</dbReference>
<dbReference type="InterPro" id="IPR015422">
    <property type="entry name" value="PyrdxlP-dep_Trfase_small"/>
</dbReference>
<dbReference type="InterPro" id="IPR001085">
    <property type="entry name" value="Ser_HO-MeTrfase"/>
</dbReference>
<dbReference type="InterPro" id="IPR049943">
    <property type="entry name" value="Ser_HO-MeTrfase-like"/>
</dbReference>
<dbReference type="InterPro" id="IPR019798">
    <property type="entry name" value="Ser_HO-MeTrfase_PLP_BS"/>
</dbReference>
<dbReference type="InterPro" id="IPR039429">
    <property type="entry name" value="SHMT-like_dom"/>
</dbReference>
<dbReference type="NCBIfam" id="NF000586">
    <property type="entry name" value="PRK00011.1"/>
    <property type="match status" value="1"/>
</dbReference>
<dbReference type="PANTHER" id="PTHR11680">
    <property type="entry name" value="SERINE HYDROXYMETHYLTRANSFERASE"/>
    <property type="match status" value="1"/>
</dbReference>
<dbReference type="PANTHER" id="PTHR11680:SF50">
    <property type="entry name" value="SERINE HYDROXYMETHYLTRANSFERASE"/>
    <property type="match status" value="1"/>
</dbReference>
<dbReference type="Pfam" id="PF00464">
    <property type="entry name" value="SHMT"/>
    <property type="match status" value="1"/>
</dbReference>
<dbReference type="PIRSF" id="PIRSF000412">
    <property type="entry name" value="SHMT"/>
    <property type="match status" value="1"/>
</dbReference>
<dbReference type="SUPFAM" id="SSF53383">
    <property type="entry name" value="PLP-dependent transferases"/>
    <property type="match status" value="1"/>
</dbReference>
<dbReference type="PROSITE" id="PS00096">
    <property type="entry name" value="SHMT"/>
    <property type="match status" value="1"/>
</dbReference>
<organism>
    <name type="scientific">Paracidovorax citrulli (strain AAC00-1)</name>
    <name type="common">Acidovorax citrulli</name>
    <dbReference type="NCBI Taxonomy" id="397945"/>
    <lineage>
        <taxon>Bacteria</taxon>
        <taxon>Pseudomonadati</taxon>
        <taxon>Pseudomonadota</taxon>
        <taxon>Betaproteobacteria</taxon>
        <taxon>Burkholderiales</taxon>
        <taxon>Comamonadaceae</taxon>
        <taxon>Paracidovorax</taxon>
    </lineage>
</organism>
<name>GLYA_PARC0</name>
<feature type="chain" id="PRO_1000006209" description="Serine hydroxymethyltransferase">
    <location>
        <begin position="1"/>
        <end position="414"/>
    </location>
</feature>
<feature type="binding site" evidence="1">
    <location>
        <position position="121"/>
    </location>
    <ligand>
        <name>(6S)-5,6,7,8-tetrahydrofolate</name>
        <dbReference type="ChEBI" id="CHEBI:57453"/>
    </ligand>
</feature>
<feature type="binding site" evidence="1">
    <location>
        <begin position="125"/>
        <end position="127"/>
    </location>
    <ligand>
        <name>(6S)-5,6,7,8-tetrahydrofolate</name>
        <dbReference type="ChEBI" id="CHEBI:57453"/>
    </ligand>
</feature>
<feature type="site" description="Plays an important role in substrate specificity" evidence="1">
    <location>
        <position position="228"/>
    </location>
</feature>
<feature type="modified residue" description="N6-(pyridoxal phosphate)lysine" evidence="1">
    <location>
        <position position="229"/>
    </location>
</feature>
<sequence length="414" mass="45046">MYQRNILVEQADPEVWAAIQAENLRQEQHIELIASENYASPAVMAAQGSQLTNKYAEGYPGKRYYGGCENVDVVEQLAIDRVKKLFGADAANVQPNSGSQANQAVLLAFLKPGDTILGMSLAEGGHLTHGMPLNMSGKWFNIVSYGLNEKEEIDYDALEAKAREHKPKLIIAGASAYSLRIDFERFAKIAKEVGAIFWVDIAHYAGLVVAGEYPNPVPFADVVTSTTHKSLRGPRGGIILMKAEHEKAINSAIFPGLQGGPLEHVIAAKAVAFKEALTPEFKAYQQQVAKNAKVFAETLIERGLRIISGRTESHVMLVDLRAKGITGKAAEAALGQAHITINKNSIPNDPEKPMVTSGIRVGTPAITTRGFKEEETRITANLLADVLENPNDEANLAAVREKVHALTSRFPVYR</sequence>
<proteinExistence type="inferred from homology"/>